<feature type="chain" id="PRO_1000122466" description="Glutamyl-tRNA(Gln) amidotransferase subunit A">
    <location>
        <begin position="1"/>
        <end position="485"/>
    </location>
</feature>
<feature type="active site" description="Charge relay system" evidence="1">
    <location>
        <position position="78"/>
    </location>
</feature>
<feature type="active site" description="Charge relay system" evidence="1">
    <location>
        <position position="153"/>
    </location>
</feature>
<feature type="active site" description="Acyl-ester intermediate" evidence="1">
    <location>
        <position position="177"/>
    </location>
</feature>
<comment type="function">
    <text evidence="1">Allows the formation of correctly charged Gln-tRNA(Gln) through the transamidation of misacylated Glu-tRNA(Gln) in organisms which lack glutaminyl-tRNA synthetase. The reaction takes place in the presence of glutamine and ATP through an activated gamma-phospho-Glu-tRNA(Gln).</text>
</comment>
<comment type="catalytic activity">
    <reaction evidence="1">
        <text>L-glutamyl-tRNA(Gln) + L-glutamine + ATP + H2O = L-glutaminyl-tRNA(Gln) + L-glutamate + ADP + phosphate + H(+)</text>
        <dbReference type="Rhea" id="RHEA:17521"/>
        <dbReference type="Rhea" id="RHEA-COMP:9681"/>
        <dbReference type="Rhea" id="RHEA-COMP:9684"/>
        <dbReference type="ChEBI" id="CHEBI:15377"/>
        <dbReference type="ChEBI" id="CHEBI:15378"/>
        <dbReference type="ChEBI" id="CHEBI:29985"/>
        <dbReference type="ChEBI" id="CHEBI:30616"/>
        <dbReference type="ChEBI" id="CHEBI:43474"/>
        <dbReference type="ChEBI" id="CHEBI:58359"/>
        <dbReference type="ChEBI" id="CHEBI:78520"/>
        <dbReference type="ChEBI" id="CHEBI:78521"/>
        <dbReference type="ChEBI" id="CHEBI:456216"/>
        <dbReference type="EC" id="6.3.5.7"/>
    </reaction>
</comment>
<comment type="subunit">
    <text evidence="1">Heterotrimer of A, B and C subunits.</text>
</comment>
<comment type="similarity">
    <text evidence="1">Belongs to the amidase family. GatA subfamily.</text>
</comment>
<evidence type="ECO:0000255" key="1">
    <source>
        <dbReference type="HAMAP-Rule" id="MF_00120"/>
    </source>
</evidence>
<keyword id="KW-0067">ATP-binding</keyword>
<keyword id="KW-0436">Ligase</keyword>
<keyword id="KW-0547">Nucleotide-binding</keyword>
<keyword id="KW-0648">Protein biosynthesis</keyword>
<organism>
    <name type="scientific">Bacillus cereus (strain Q1)</name>
    <dbReference type="NCBI Taxonomy" id="361100"/>
    <lineage>
        <taxon>Bacteria</taxon>
        <taxon>Bacillati</taxon>
        <taxon>Bacillota</taxon>
        <taxon>Bacilli</taxon>
        <taxon>Bacillales</taxon>
        <taxon>Bacillaceae</taxon>
        <taxon>Bacillus</taxon>
        <taxon>Bacillus cereus group</taxon>
    </lineage>
</organism>
<accession>B9J1N0</accession>
<dbReference type="EC" id="6.3.5.7" evidence="1"/>
<dbReference type="EMBL" id="CP000227">
    <property type="protein sequence ID" value="ACM10843.1"/>
    <property type="molecule type" value="Genomic_DNA"/>
</dbReference>
<dbReference type="SMR" id="B9J1N0"/>
<dbReference type="KEGG" id="bcq:BCQ_0371"/>
<dbReference type="HOGENOM" id="CLU_009600_0_3_9"/>
<dbReference type="Proteomes" id="UP000000441">
    <property type="component" value="Chromosome"/>
</dbReference>
<dbReference type="GO" id="GO:0030956">
    <property type="term" value="C:glutamyl-tRNA(Gln) amidotransferase complex"/>
    <property type="evidence" value="ECO:0007669"/>
    <property type="project" value="InterPro"/>
</dbReference>
<dbReference type="GO" id="GO:0005524">
    <property type="term" value="F:ATP binding"/>
    <property type="evidence" value="ECO:0007669"/>
    <property type="project" value="UniProtKB-KW"/>
</dbReference>
<dbReference type="GO" id="GO:0050567">
    <property type="term" value="F:glutaminyl-tRNA synthase (glutamine-hydrolyzing) activity"/>
    <property type="evidence" value="ECO:0007669"/>
    <property type="project" value="UniProtKB-UniRule"/>
</dbReference>
<dbReference type="GO" id="GO:0006412">
    <property type="term" value="P:translation"/>
    <property type="evidence" value="ECO:0007669"/>
    <property type="project" value="UniProtKB-UniRule"/>
</dbReference>
<dbReference type="Gene3D" id="3.90.1300.10">
    <property type="entry name" value="Amidase signature (AS) domain"/>
    <property type="match status" value="1"/>
</dbReference>
<dbReference type="HAMAP" id="MF_00120">
    <property type="entry name" value="GatA"/>
    <property type="match status" value="1"/>
</dbReference>
<dbReference type="InterPro" id="IPR000120">
    <property type="entry name" value="Amidase"/>
</dbReference>
<dbReference type="InterPro" id="IPR020556">
    <property type="entry name" value="Amidase_CS"/>
</dbReference>
<dbReference type="InterPro" id="IPR023631">
    <property type="entry name" value="Amidase_dom"/>
</dbReference>
<dbReference type="InterPro" id="IPR036928">
    <property type="entry name" value="AS_sf"/>
</dbReference>
<dbReference type="InterPro" id="IPR004412">
    <property type="entry name" value="GatA"/>
</dbReference>
<dbReference type="NCBIfam" id="TIGR00132">
    <property type="entry name" value="gatA"/>
    <property type="match status" value="1"/>
</dbReference>
<dbReference type="PANTHER" id="PTHR11895:SF151">
    <property type="entry name" value="GLUTAMYL-TRNA(GLN) AMIDOTRANSFERASE SUBUNIT A"/>
    <property type="match status" value="1"/>
</dbReference>
<dbReference type="PANTHER" id="PTHR11895">
    <property type="entry name" value="TRANSAMIDASE"/>
    <property type="match status" value="1"/>
</dbReference>
<dbReference type="Pfam" id="PF01425">
    <property type="entry name" value="Amidase"/>
    <property type="match status" value="1"/>
</dbReference>
<dbReference type="SUPFAM" id="SSF75304">
    <property type="entry name" value="Amidase signature (AS) enzymes"/>
    <property type="match status" value="1"/>
</dbReference>
<dbReference type="PROSITE" id="PS00571">
    <property type="entry name" value="AMIDASES"/>
    <property type="match status" value="1"/>
</dbReference>
<proteinExistence type="inferred from homology"/>
<reference key="1">
    <citation type="journal article" date="2009" name="J. Bacteriol.">
        <title>Complete genome sequence of the extremophilic Bacillus cereus strain Q1 with industrial applications.</title>
        <authorList>
            <person name="Xiong Z."/>
            <person name="Jiang Y."/>
            <person name="Qi D."/>
            <person name="Lu H."/>
            <person name="Yang F."/>
            <person name="Yang J."/>
            <person name="Chen L."/>
            <person name="Sun L."/>
            <person name="Xu X."/>
            <person name="Xue Y."/>
            <person name="Zhu Y."/>
            <person name="Jin Q."/>
        </authorList>
    </citation>
    <scope>NUCLEOTIDE SEQUENCE [LARGE SCALE GENOMIC DNA]</scope>
    <source>
        <strain>Q1</strain>
    </source>
</reference>
<gene>
    <name evidence="1" type="primary">gatA</name>
    <name type="ordered locus">BCQ_0371</name>
</gene>
<protein>
    <recommendedName>
        <fullName evidence="1">Glutamyl-tRNA(Gln) amidotransferase subunit A</fullName>
        <shortName evidence="1">Glu-ADT subunit A</shortName>
        <ecNumber evidence="1">6.3.5.7</ecNumber>
    </recommendedName>
</protein>
<sequence length="485" mass="52321">MSLFDHSVSELHKKLNNKEISVTDLVEESYKRIADVEDNVKAFLTLDEENARAKAKELDAKIGAEDNGLLFGMPIGVKDNIVTNGLRTTCASKMLANFDPIYDATVVQKLKAADTITIGKLNMDEFAMGSSNENSGFYATKNPWNLDYVPGGSSGGSAAAVAAGEVLFSLGSDTGGSIRQPAAYCGVVGLKPTYGRVSRYGLVAFASSLDQIGPITRTVEDNAYLLQAISGLDRMDATSANVEVGNYLAGLTGDVKGLRIAVPKEYLGEGVGEEARESVLAALKVLEGMGATWEEVSLPHSKYALATYYLLSSSEASANLSRFDGVRYGVRSDNVNNLLDLYKNTRSEGFGDEVKRRIMLGTFALSSGYYDAYYKKAQQVRTLIKNDFENVFANYDVIIGPTTPTPAFKVGEKVDDPMTMYANDILTIPVNLAGVPAISVPCGFGANNMPLGLQIIGKHFDEATIYRVAHAFEQATDYHTKKASL</sequence>
<name>GATA_BACCQ</name>